<reference key="1">
    <citation type="journal article" date="2004" name="Nat. Genet.">
        <title>Complete sequencing and characterization of 21,243 full-length human cDNAs.</title>
        <authorList>
            <person name="Ota T."/>
            <person name="Suzuki Y."/>
            <person name="Nishikawa T."/>
            <person name="Otsuki T."/>
            <person name="Sugiyama T."/>
            <person name="Irie R."/>
            <person name="Wakamatsu A."/>
            <person name="Hayashi K."/>
            <person name="Sato H."/>
            <person name="Nagai K."/>
            <person name="Kimura K."/>
            <person name="Makita H."/>
            <person name="Sekine M."/>
            <person name="Obayashi M."/>
            <person name="Nishi T."/>
            <person name="Shibahara T."/>
            <person name="Tanaka T."/>
            <person name="Ishii S."/>
            <person name="Yamamoto J."/>
            <person name="Saito K."/>
            <person name="Kawai Y."/>
            <person name="Isono Y."/>
            <person name="Nakamura Y."/>
            <person name="Nagahari K."/>
            <person name="Murakami K."/>
            <person name="Yasuda T."/>
            <person name="Iwayanagi T."/>
            <person name="Wagatsuma M."/>
            <person name="Shiratori A."/>
            <person name="Sudo H."/>
            <person name="Hosoiri T."/>
            <person name="Kaku Y."/>
            <person name="Kodaira H."/>
            <person name="Kondo H."/>
            <person name="Sugawara M."/>
            <person name="Takahashi M."/>
            <person name="Kanda K."/>
            <person name="Yokoi T."/>
            <person name="Furuya T."/>
            <person name="Kikkawa E."/>
            <person name="Omura Y."/>
            <person name="Abe K."/>
            <person name="Kamihara K."/>
            <person name="Katsuta N."/>
            <person name="Sato K."/>
            <person name="Tanikawa M."/>
            <person name="Yamazaki M."/>
            <person name="Ninomiya K."/>
            <person name="Ishibashi T."/>
            <person name="Yamashita H."/>
            <person name="Murakawa K."/>
            <person name="Fujimori K."/>
            <person name="Tanai H."/>
            <person name="Kimata M."/>
            <person name="Watanabe M."/>
            <person name="Hiraoka S."/>
            <person name="Chiba Y."/>
            <person name="Ishida S."/>
            <person name="Ono Y."/>
            <person name="Takiguchi S."/>
            <person name="Watanabe S."/>
            <person name="Yosida M."/>
            <person name="Hotuta T."/>
            <person name="Kusano J."/>
            <person name="Kanehori K."/>
            <person name="Takahashi-Fujii A."/>
            <person name="Hara H."/>
            <person name="Tanase T.-O."/>
            <person name="Nomura Y."/>
            <person name="Togiya S."/>
            <person name="Komai F."/>
            <person name="Hara R."/>
            <person name="Takeuchi K."/>
            <person name="Arita M."/>
            <person name="Imose N."/>
            <person name="Musashino K."/>
            <person name="Yuuki H."/>
            <person name="Oshima A."/>
            <person name="Sasaki N."/>
            <person name="Aotsuka S."/>
            <person name="Yoshikawa Y."/>
            <person name="Matsunawa H."/>
            <person name="Ichihara T."/>
            <person name="Shiohata N."/>
            <person name="Sano S."/>
            <person name="Moriya S."/>
            <person name="Momiyama H."/>
            <person name="Satoh N."/>
            <person name="Takami S."/>
            <person name="Terashima Y."/>
            <person name="Suzuki O."/>
            <person name="Nakagawa S."/>
            <person name="Senoh A."/>
            <person name="Mizoguchi H."/>
            <person name="Goto Y."/>
            <person name="Shimizu F."/>
            <person name="Wakebe H."/>
            <person name="Hishigaki H."/>
            <person name="Watanabe T."/>
            <person name="Sugiyama A."/>
            <person name="Takemoto M."/>
            <person name="Kawakami B."/>
            <person name="Yamazaki M."/>
            <person name="Watanabe K."/>
            <person name="Kumagai A."/>
            <person name="Itakura S."/>
            <person name="Fukuzumi Y."/>
            <person name="Fujimori Y."/>
            <person name="Komiyama M."/>
            <person name="Tashiro H."/>
            <person name="Tanigami A."/>
            <person name="Fujiwara T."/>
            <person name="Ono T."/>
            <person name="Yamada K."/>
            <person name="Fujii Y."/>
            <person name="Ozaki K."/>
            <person name="Hirao M."/>
            <person name="Ohmori Y."/>
            <person name="Kawabata A."/>
            <person name="Hikiji T."/>
            <person name="Kobatake N."/>
            <person name="Inagaki H."/>
            <person name="Ikema Y."/>
            <person name="Okamoto S."/>
            <person name="Okitani R."/>
            <person name="Kawakami T."/>
            <person name="Noguchi S."/>
            <person name="Itoh T."/>
            <person name="Shigeta K."/>
            <person name="Senba T."/>
            <person name="Matsumura K."/>
            <person name="Nakajima Y."/>
            <person name="Mizuno T."/>
            <person name="Morinaga M."/>
            <person name="Sasaki M."/>
            <person name="Togashi T."/>
            <person name="Oyama M."/>
            <person name="Hata H."/>
            <person name="Watanabe M."/>
            <person name="Komatsu T."/>
            <person name="Mizushima-Sugano J."/>
            <person name="Satoh T."/>
            <person name="Shirai Y."/>
            <person name="Takahashi Y."/>
            <person name="Nakagawa K."/>
            <person name="Okumura K."/>
            <person name="Nagase T."/>
            <person name="Nomura N."/>
            <person name="Kikuchi H."/>
            <person name="Masuho Y."/>
            <person name="Yamashita R."/>
            <person name="Nakai K."/>
            <person name="Yada T."/>
            <person name="Nakamura Y."/>
            <person name="Ohara O."/>
            <person name="Isogai T."/>
            <person name="Sugano S."/>
        </authorList>
    </citation>
    <scope>NUCLEOTIDE SEQUENCE [LARGE SCALE MRNA]</scope>
    <scope>VARIANT SER-443</scope>
    <source>
        <tissue>Spleen</tissue>
    </source>
</reference>
<reference key="2">
    <citation type="journal article" date="2006" name="Nature">
        <title>The finished DNA sequence of human chromosome 12.</title>
        <authorList>
            <person name="Scherer S.E."/>
            <person name="Muzny D.M."/>
            <person name="Buhay C.J."/>
            <person name="Chen R."/>
            <person name="Cree A."/>
            <person name="Ding Y."/>
            <person name="Dugan-Rocha S."/>
            <person name="Gill R."/>
            <person name="Gunaratne P."/>
            <person name="Harris R.A."/>
            <person name="Hawes A.C."/>
            <person name="Hernandez J."/>
            <person name="Hodgson A.V."/>
            <person name="Hume J."/>
            <person name="Jackson A."/>
            <person name="Khan Z.M."/>
            <person name="Kovar-Smith C."/>
            <person name="Lewis L.R."/>
            <person name="Lozado R.J."/>
            <person name="Metzker M.L."/>
            <person name="Milosavljevic A."/>
            <person name="Miner G.R."/>
            <person name="Montgomery K.T."/>
            <person name="Morgan M.B."/>
            <person name="Nazareth L.V."/>
            <person name="Scott G."/>
            <person name="Sodergren E."/>
            <person name="Song X.-Z."/>
            <person name="Steffen D."/>
            <person name="Lovering R.C."/>
            <person name="Wheeler D.A."/>
            <person name="Worley K.C."/>
            <person name="Yuan Y."/>
            <person name="Zhang Z."/>
            <person name="Adams C.Q."/>
            <person name="Ansari-Lari M.A."/>
            <person name="Ayele M."/>
            <person name="Brown M.J."/>
            <person name="Chen G."/>
            <person name="Chen Z."/>
            <person name="Clerc-Blankenburg K.P."/>
            <person name="Davis C."/>
            <person name="Delgado O."/>
            <person name="Dinh H.H."/>
            <person name="Draper H."/>
            <person name="Gonzalez-Garay M.L."/>
            <person name="Havlak P."/>
            <person name="Jackson L.R."/>
            <person name="Jacob L.S."/>
            <person name="Kelly S.H."/>
            <person name="Li L."/>
            <person name="Li Z."/>
            <person name="Liu J."/>
            <person name="Liu W."/>
            <person name="Lu J."/>
            <person name="Maheshwari M."/>
            <person name="Nguyen B.-V."/>
            <person name="Okwuonu G.O."/>
            <person name="Pasternak S."/>
            <person name="Perez L.M."/>
            <person name="Plopper F.J.H."/>
            <person name="Santibanez J."/>
            <person name="Shen H."/>
            <person name="Tabor P.E."/>
            <person name="Verduzco D."/>
            <person name="Waldron L."/>
            <person name="Wang Q."/>
            <person name="Williams G.A."/>
            <person name="Zhang J."/>
            <person name="Zhou J."/>
            <person name="Allen C.C."/>
            <person name="Amin A.G."/>
            <person name="Anyalebechi V."/>
            <person name="Bailey M."/>
            <person name="Barbaria J.A."/>
            <person name="Bimage K.E."/>
            <person name="Bryant N.P."/>
            <person name="Burch P.E."/>
            <person name="Burkett C.E."/>
            <person name="Burrell K.L."/>
            <person name="Calderon E."/>
            <person name="Cardenas V."/>
            <person name="Carter K."/>
            <person name="Casias K."/>
            <person name="Cavazos I."/>
            <person name="Cavazos S.R."/>
            <person name="Ceasar H."/>
            <person name="Chacko J."/>
            <person name="Chan S.N."/>
            <person name="Chavez D."/>
            <person name="Christopoulos C."/>
            <person name="Chu J."/>
            <person name="Cockrell R."/>
            <person name="Cox C.D."/>
            <person name="Dang M."/>
            <person name="Dathorne S.R."/>
            <person name="David R."/>
            <person name="Davis C.M."/>
            <person name="Davy-Carroll L."/>
            <person name="Deshazo D.R."/>
            <person name="Donlin J.E."/>
            <person name="D'Souza L."/>
            <person name="Eaves K.A."/>
            <person name="Egan A."/>
            <person name="Emery-Cohen A.J."/>
            <person name="Escotto M."/>
            <person name="Flagg N."/>
            <person name="Forbes L.D."/>
            <person name="Gabisi A.M."/>
            <person name="Garza M."/>
            <person name="Hamilton C."/>
            <person name="Henderson N."/>
            <person name="Hernandez O."/>
            <person name="Hines S."/>
            <person name="Hogues M.E."/>
            <person name="Huang M."/>
            <person name="Idlebird D.G."/>
            <person name="Johnson R."/>
            <person name="Jolivet A."/>
            <person name="Jones S."/>
            <person name="Kagan R."/>
            <person name="King L.M."/>
            <person name="Leal B."/>
            <person name="Lebow H."/>
            <person name="Lee S."/>
            <person name="LeVan J.M."/>
            <person name="Lewis L.C."/>
            <person name="London P."/>
            <person name="Lorensuhewa L.M."/>
            <person name="Loulseged H."/>
            <person name="Lovett D.A."/>
            <person name="Lucier A."/>
            <person name="Lucier R.L."/>
            <person name="Ma J."/>
            <person name="Madu R.C."/>
            <person name="Mapua P."/>
            <person name="Martindale A.D."/>
            <person name="Martinez E."/>
            <person name="Massey E."/>
            <person name="Mawhiney S."/>
            <person name="Meador M.G."/>
            <person name="Mendez S."/>
            <person name="Mercado C."/>
            <person name="Mercado I.C."/>
            <person name="Merritt C.E."/>
            <person name="Miner Z.L."/>
            <person name="Minja E."/>
            <person name="Mitchell T."/>
            <person name="Mohabbat F."/>
            <person name="Mohabbat K."/>
            <person name="Montgomery B."/>
            <person name="Moore N."/>
            <person name="Morris S."/>
            <person name="Munidasa M."/>
            <person name="Ngo R.N."/>
            <person name="Nguyen N.B."/>
            <person name="Nickerson E."/>
            <person name="Nwaokelemeh O.O."/>
            <person name="Nwokenkwo S."/>
            <person name="Obregon M."/>
            <person name="Oguh M."/>
            <person name="Oragunye N."/>
            <person name="Oviedo R.J."/>
            <person name="Parish B.J."/>
            <person name="Parker D.N."/>
            <person name="Parrish J."/>
            <person name="Parks K.L."/>
            <person name="Paul H.A."/>
            <person name="Payton B.A."/>
            <person name="Perez A."/>
            <person name="Perrin W."/>
            <person name="Pickens A."/>
            <person name="Primus E.L."/>
            <person name="Pu L.-L."/>
            <person name="Puazo M."/>
            <person name="Quiles M.M."/>
            <person name="Quiroz J.B."/>
            <person name="Rabata D."/>
            <person name="Reeves K."/>
            <person name="Ruiz S.J."/>
            <person name="Shao H."/>
            <person name="Sisson I."/>
            <person name="Sonaike T."/>
            <person name="Sorelle R.P."/>
            <person name="Sutton A.E."/>
            <person name="Svatek A.F."/>
            <person name="Svetz L.A."/>
            <person name="Tamerisa K.S."/>
            <person name="Taylor T.R."/>
            <person name="Teague B."/>
            <person name="Thomas N."/>
            <person name="Thorn R.D."/>
            <person name="Trejos Z.Y."/>
            <person name="Trevino B.K."/>
            <person name="Ukegbu O.N."/>
            <person name="Urban J.B."/>
            <person name="Vasquez L.I."/>
            <person name="Vera V.A."/>
            <person name="Villasana D.M."/>
            <person name="Wang L."/>
            <person name="Ward-Moore S."/>
            <person name="Warren J.T."/>
            <person name="Wei X."/>
            <person name="White F."/>
            <person name="Williamson A.L."/>
            <person name="Wleczyk R."/>
            <person name="Wooden H.S."/>
            <person name="Wooden S.H."/>
            <person name="Yen J."/>
            <person name="Yoon L."/>
            <person name="Yoon V."/>
            <person name="Zorrilla S.E."/>
            <person name="Nelson D."/>
            <person name="Kucherlapati R."/>
            <person name="Weinstock G."/>
            <person name="Gibbs R.A."/>
        </authorList>
    </citation>
    <scope>NUCLEOTIDE SEQUENCE [LARGE SCALE GENOMIC DNA]</scope>
</reference>
<reference key="3">
    <citation type="submission" date="2005-07" db="EMBL/GenBank/DDBJ databases">
        <authorList>
            <person name="Mural R.J."/>
            <person name="Istrail S."/>
            <person name="Sutton G.G."/>
            <person name="Florea L."/>
            <person name="Halpern A.L."/>
            <person name="Mobarry C.M."/>
            <person name="Lippert R."/>
            <person name="Walenz B."/>
            <person name="Shatkay H."/>
            <person name="Dew I."/>
            <person name="Miller J.R."/>
            <person name="Flanigan M.J."/>
            <person name="Edwards N.J."/>
            <person name="Bolanos R."/>
            <person name="Fasulo D."/>
            <person name="Halldorsson B.V."/>
            <person name="Hannenhalli S."/>
            <person name="Turner R."/>
            <person name="Yooseph S."/>
            <person name="Lu F."/>
            <person name="Nusskern D.R."/>
            <person name="Shue B.C."/>
            <person name="Zheng X.H."/>
            <person name="Zhong F."/>
            <person name="Delcher A.L."/>
            <person name="Huson D.H."/>
            <person name="Kravitz S.A."/>
            <person name="Mouchard L."/>
            <person name="Reinert K."/>
            <person name="Remington K.A."/>
            <person name="Clark A.G."/>
            <person name="Waterman M.S."/>
            <person name="Eichler E.E."/>
            <person name="Adams M.D."/>
            <person name="Hunkapiller M.W."/>
            <person name="Myers E.W."/>
            <person name="Venter J.C."/>
        </authorList>
    </citation>
    <scope>NUCLEOTIDE SEQUENCE [LARGE SCALE GENOMIC DNA]</scope>
    <scope>VARIANT SER-443</scope>
</reference>
<reference key="4">
    <citation type="journal article" date="2004" name="Genome Res.">
        <title>The status, quality, and expansion of the NIH full-length cDNA project: the Mammalian Gene Collection (MGC).</title>
        <authorList>
            <consortium name="The MGC Project Team"/>
        </authorList>
    </citation>
    <scope>NUCLEOTIDE SEQUENCE [LARGE SCALE MRNA]</scope>
    <scope>VARIANT SER-443</scope>
</reference>
<reference key="5">
    <citation type="journal article" date="2017" name="Nature">
        <title>KICSTOR recruits GATOR1 to the lysosome and is necessary for nutrients to regulate mTORC1.</title>
        <authorList>
            <person name="Wolfson R.L."/>
            <person name="Chantranupong L."/>
            <person name="Wyant G.A."/>
            <person name="Gu X."/>
            <person name="Orozco J.M."/>
            <person name="Shen K."/>
            <person name="Condon K.J."/>
            <person name="Petri S."/>
            <person name="Kedir J."/>
            <person name="Scaria S.M."/>
            <person name="Abu-Remaileh M."/>
            <person name="Frankel W.N."/>
            <person name="Sabatini D.M."/>
        </authorList>
    </citation>
    <scope>FUNCTION</scope>
    <scope>IDENTIFICATION IN THE KICSTOR COMPLEX</scope>
    <scope>SUBCELLULAR LOCATION</scope>
</reference>
<reference key="6">
    <citation type="journal article" date="2025" name="Am. J. Hum. Genet.">
        <title>Bi-allelic KICS2 mutations impair KICSTOR complex-mediated mTORC1 regulation, causing intellectual disability and epilepsy.</title>
        <authorList>
            <person name="Buchert R."/>
            <person name="Burkhalter M.D."/>
            <person name="Huridou C."/>
            <person name="Sofan L."/>
            <person name="Roser T."/>
            <person name="Cremer K."/>
            <person name="Alvi J.R."/>
            <person name="Efthymiou S."/>
            <person name="Froukh T."/>
            <person name="Gulieva S."/>
            <person name="Guliyeva U."/>
            <person name="Hamdallah M."/>
            <person name="Holder-Espinasse M."/>
            <person name="Kaiyrzhanov R."/>
            <person name="Klingler D."/>
            <person name="Koko M."/>
            <person name="Matthies L."/>
            <person name="Park J."/>
            <person name="Sturm M."/>
            <person name="Velic A."/>
            <person name="Spranger S."/>
            <person name="Sultan T."/>
            <person name="Engels H."/>
            <person name="Lerche H."/>
            <person name="Houlden H."/>
            <person name="Pagnamenta A.T."/>
            <person name="Borggraefe I."/>
            <person name="Weber Y."/>
            <person name="Bonnen P.E."/>
            <person name="Maroofian R."/>
            <person name="Riess O."/>
            <person name="Weber J.J."/>
            <person name="Philipp M."/>
            <person name="Haack T.B."/>
        </authorList>
    </citation>
    <scope>VARIANTS MRT83 3-GLU--GLY-445 DEL; GLU-296 AND CYS-393</scope>
    <scope>CHARACTERIZATION OF VARIANTS MRT83 GLU-296 AND CYS-393</scope>
    <scope>INVOLVEMENT IN MRT83</scope>
</reference>
<organism>
    <name type="scientific">Homo sapiens</name>
    <name type="common">Human</name>
    <dbReference type="NCBI Taxonomy" id="9606"/>
    <lineage>
        <taxon>Eukaryota</taxon>
        <taxon>Metazoa</taxon>
        <taxon>Chordata</taxon>
        <taxon>Craniata</taxon>
        <taxon>Vertebrata</taxon>
        <taxon>Euteleostomi</taxon>
        <taxon>Mammalia</taxon>
        <taxon>Eutheria</taxon>
        <taxon>Euarchontoglires</taxon>
        <taxon>Primates</taxon>
        <taxon>Haplorrhini</taxon>
        <taxon>Catarrhini</taxon>
        <taxon>Hominidae</taxon>
        <taxon>Homo</taxon>
    </lineage>
</organism>
<name>KICS2_HUMAN</name>
<proteinExistence type="evidence at protein level"/>
<keyword id="KW-0225">Disease variant</keyword>
<keyword id="KW-0991">Intellectual disability</keyword>
<keyword id="KW-0458">Lysosome</keyword>
<keyword id="KW-0472">Membrane</keyword>
<keyword id="KW-1267">Proteomics identification</keyword>
<keyword id="KW-1185">Reference proteome</keyword>
<dbReference type="EMBL" id="AK057111">
    <property type="protein sequence ID" value="BAB71367.1"/>
    <property type="molecule type" value="mRNA"/>
</dbReference>
<dbReference type="EMBL" id="AC012158">
    <property type="status" value="NOT_ANNOTATED_CDS"/>
    <property type="molecule type" value="Genomic_DNA"/>
</dbReference>
<dbReference type="EMBL" id="CH471054">
    <property type="protein sequence ID" value="EAW97124.1"/>
    <property type="molecule type" value="Genomic_DNA"/>
</dbReference>
<dbReference type="EMBL" id="BC071634">
    <property type="protein sequence ID" value="AAH71634.1"/>
    <property type="molecule type" value="mRNA"/>
</dbReference>
<dbReference type="CCDS" id="CCDS41803.1"/>
<dbReference type="RefSeq" id="NP_689653.3">
    <property type="nucleotide sequence ID" value="NM_152440.4"/>
</dbReference>
<dbReference type="SMR" id="Q96MD2"/>
<dbReference type="BioGRID" id="126862">
    <property type="interactions" value="13"/>
</dbReference>
<dbReference type="ComplexPortal" id="CPX-6229">
    <property type="entry name" value="KICSTOR complex"/>
</dbReference>
<dbReference type="CORUM" id="Q96MD2"/>
<dbReference type="FunCoup" id="Q96MD2">
    <property type="interactions" value="429"/>
</dbReference>
<dbReference type="IntAct" id="Q96MD2">
    <property type="interactions" value="6"/>
</dbReference>
<dbReference type="MINT" id="Q96MD2"/>
<dbReference type="STRING" id="9606.ENSP00000311486"/>
<dbReference type="iPTMnet" id="Q96MD2"/>
<dbReference type="PhosphoSitePlus" id="Q96MD2"/>
<dbReference type="BioMuta" id="C12orf66"/>
<dbReference type="DMDM" id="296439467"/>
<dbReference type="jPOST" id="Q96MD2"/>
<dbReference type="MassIVE" id="Q96MD2"/>
<dbReference type="PaxDb" id="9606-ENSP00000311486"/>
<dbReference type="PeptideAtlas" id="Q96MD2"/>
<dbReference type="ProteomicsDB" id="77335"/>
<dbReference type="Pumba" id="Q96MD2"/>
<dbReference type="Antibodypedia" id="53140">
    <property type="antibodies" value="10 antibodies from 6 providers"/>
</dbReference>
<dbReference type="DNASU" id="144577"/>
<dbReference type="Ensembl" id="ENST00000398055.8">
    <property type="protein sequence ID" value="ENSP00000381132.4"/>
    <property type="gene ID" value="ENSG00000174206.13"/>
</dbReference>
<dbReference type="GeneID" id="144577"/>
<dbReference type="KEGG" id="hsa:144577"/>
<dbReference type="MANE-Select" id="ENST00000398055.8">
    <property type="protein sequence ID" value="ENSP00000381132.4"/>
    <property type="RefSeq nucleotide sequence ID" value="NM_152440.5"/>
    <property type="RefSeq protein sequence ID" value="NP_689653.4"/>
</dbReference>
<dbReference type="UCSC" id="uc001srw.5">
    <property type="organism name" value="human"/>
</dbReference>
<dbReference type="AGR" id="HGNC:26517"/>
<dbReference type="CTD" id="144577"/>
<dbReference type="GeneCards" id="KICS2"/>
<dbReference type="HGNC" id="HGNC:26517">
    <property type="gene designation" value="KICS2"/>
</dbReference>
<dbReference type="HPA" id="ENSG00000174206">
    <property type="expression patterns" value="Low tissue specificity"/>
</dbReference>
<dbReference type="MIM" id="617420">
    <property type="type" value="gene"/>
</dbReference>
<dbReference type="MIM" id="621100">
    <property type="type" value="phenotype"/>
</dbReference>
<dbReference type="neXtProt" id="NX_Q96MD2"/>
<dbReference type="OpenTargets" id="ENSG00000174206"/>
<dbReference type="VEuPathDB" id="HostDB:ENSG00000174206"/>
<dbReference type="eggNOG" id="ENOG502QTBE">
    <property type="taxonomic scope" value="Eukaryota"/>
</dbReference>
<dbReference type="GeneTree" id="ENSGT00390000009583"/>
<dbReference type="HOGENOM" id="CLU_050627_0_0_1"/>
<dbReference type="InParanoid" id="Q96MD2"/>
<dbReference type="OMA" id="PQKFINA"/>
<dbReference type="PAN-GO" id="Q96MD2">
    <property type="GO annotations" value="5 GO annotations based on evolutionary models"/>
</dbReference>
<dbReference type="PhylomeDB" id="Q96MD2"/>
<dbReference type="TreeFam" id="TF329125"/>
<dbReference type="PathwayCommons" id="Q96MD2"/>
<dbReference type="Reactome" id="R-HSA-9639288">
    <property type="pathway name" value="Amino acids regulate mTORC1"/>
</dbReference>
<dbReference type="SignaLink" id="Q96MD2"/>
<dbReference type="BioGRID-ORCS" id="144577">
    <property type="hits" value="18 hits in 1138 CRISPR screens"/>
</dbReference>
<dbReference type="ChiTaRS" id="C12orf66">
    <property type="organism name" value="human"/>
</dbReference>
<dbReference type="GenomeRNAi" id="144577"/>
<dbReference type="Pharos" id="Q96MD2">
    <property type="development level" value="Tbio"/>
</dbReference>
<dbReference type="PRO" id="PR:Q96MD2"/>
<dbReference type="Proteomes" id="UP000005640">
    <property type="component" value="Chromosome 12"/>
</dbReference>
<dbReference type="RNAct" id="Q96MD2">
    <property type="molecule type" value="protein"/>
</dbReference>
<dbReference type="Bgee" id="ENSG00000174206">
    <property type="expression patterns" value="Expressed in secondary oocyte and 161 other cell types or tissues"/>
</dbReference>
<dbReference type="ExpressionAtlas" id="Q96MD2">
    <property type="expression patterns" value="baseline and differential"/>
</dbReference>
<dbReference type="GO" id="GO:0045171">
    <property type="term" value="C:intercellular bridge"/>
    <property type="evidence" value="ECO:0000314"/>
    <property type="project" value="HPA"/>
</dbReference>
<dbReference type="GO" id="GO:0140007">
    <property type="term" value="C:KICSTOR complex"/>
    <property type="evidence" value="ECO:0000314"/>
    <property type="project" value="UniProtKB"/>
</dbReference>
<dbReference type="GO" id="GO:0005765">
    <property type="term" value="C:lysosomal membrane"/>
    <property type="evidence" value="ECO:0000304"/>
    <property type="project" value="Reactome"/>
</dbReference>
<dbReference type="GO" id="GO:0005764">
    <property type="term" value="C:lysosome"/>
    <property type="evidence" value="ECO:0000314"/>
    <property type="project" value="HPA"/>
</dbReference>
<dbReference type="GO" id="GO:0034198">
    <property type="term" value="P:cellular response to amino acid starvation"/>
    <property type="evidence" value="ECO:0000315"/>
    <property type="project" value="UniProtKB"/>
</dbReference>
<dbReference type="GO" id="GO:0042149">
    <property type="term" value="P:cellular response to glucose starvation"/>
    <property type="evidence" value="ECO:0000315"/>
    <property type="project" value="UniProtKB"/>
</dbReference>
<dbReference type="GO" id="GO:1904262">
    <property type="term" value="P:negative regulation of TORC1 signaling"/>
    <property type="evidence" value="ECO:0000315"/>
    <property type="project" value="UniProtKB"/>
</dbReference>
<dbReference type="GO" id="GO:0061462">
    <property type="term" value="P:protein localization to lysosome"/>
    <property type="evidence" value="ECO:0000315"/>
    <property type="project" value="UniProtKB"/>
</dbReference>
<dbReference type="FunFam" id="1.10.3450.30:FF:000001">
    <property type="entry name" value="KICSTOR complex protein C12orf66 homolog"/>
    <property type="match status" value="1"/>
</dbReference>
<dbReference type="Gene3D" id="1.10.3450.30">
    <property type="match status" value="1"/>
</dbReference>
<dbReference type="InterPro" id="IPR038060">
    <property type="entry name" value="C12orf66-like_central_sf"/>
</dbReference>
<dbReference type="InterPro" id="IPR018544">
    <property type="entry name" value="KICS_2"/>
</dbReference>
<dbReference type="PANTHER" id="PTHR31581">
    <property type="entry name" value="KICSTOR COMPLEX PROTEIN C12ORF66"/>
    <property type="match status" value="1"/>
</dbReference>
<dbReference type="PANTHER" id="PTHR31581:SF1">
    <property type="entry name" value="KICSTOR SUBUNIT 2"/>
    <property type="match status" value="1"/>
</dbReference>
<dbReference type="Pfam" id="PF09404">
    <property type="entry name" value="C12orf66_like"/>
    <property type="match status" value="1"/>
</dbReference>
<dbReference type="SUPFAM" id="SSF160651">
    <property type="entry name" value="FLJ32549 C-terminal domain-like"/>
    <property type="match status" value="1"/>
</dbReference>
<dbReference type="SUPFAM" id="SSF158548">
    <property type="entry name" value="FLJ32549 domain-like"/>
    <property type="match status" value="1"/>
</dbReference>
<comment type="function">
    <text evidence="3">As part of the KICSTOR complex functions in the amino acid-sensing branch of the TORC1 signaling pathway. Recruits, in an amino acid-independent manner, the GATOR1 complex to the lysosomal membranes and allows its interaction with GATOR2 and the RAG GTPases. Functions upstream of the RAG GTPases and is required to negatively regulate mTORC1 signaling in absence of amino acids. In absence of the KICSTOR complex mTORC1 is constitutively localized to the lysosome and activated. The KICSTOR complex is also probably involved in the regulation of mTORC1 by glucose.</text>
</comment>
<comment type="subunit">
    <text evidence="3">Part of the KICSTOR complex composed of KPTN, ITFG2, KICS2 and SZT2. SZT2 probably serves as a link between the other three proteins in the KICSTOR complex and may mediate the direct interaction with the GATOR complex via GATOR1. The KICSTOR complex interacts directly with the GATOR1 complex and most probably indirectly with the GATOR2 complex in an amino acid-independent manner.</text>
</comment>
<comment type="subcellular location">
    <subcellularLocation>
        <location evidence="7">Lysosome membrane</location>
    </subcellularLocation>
</comment>
<comment type="disease" evidence="4">
    <disease id="DI-07004">
        <name>Intellectual developmental disorder, autosomal recessive 83</name>
        <acronym>MRT83</acronym>
        <description>An autosomal recessive disorder characterized by developmental delay, mild to moderate intellectual disability, and poor or absent speech. Additional variable features include seizures, hearing impairment, hypotonia, and non-specific facial dysmorphism.</description>
        <dbReference type="MIM" id="621100"/>
    </disease>
    <text>The disease is caused by variants affecting the gene represented in this entry.</text>
</comment>
<comment type="similarity">
    <text evidence="6">Belongs to the KICS2 family.</text>
</comment>
<accession>Q96MD2</accession>
<accession>C9JX54</accession>
<accession>Q8IYA0</accession>
<evidence type="ECO:0000269" key="1">
    <source>
    </source>
</evidence>
<evidence type="ECO:0000269" key="2">
    <source>
    </source>
</evidence>
<evidence type="ECO:0000269" key="3">
    <source>
    </source>
</evidence>
<evidence type="ECO:0000269" key="4">
    <source>
    </source>
</evidence>
<evidence type="ECO:0000269" key="5">
    <source ref="3"/>
</evidence>
<evidence type="ECO:0000305" key="6"/>
<evidence type="ECO:0000305" key="7">
    <source>
    </source>
</evidence>
<evidence type="ECO:0000312" key="8">
    <source>
        <dbReference type="HGNC" id="HGNC:26517"/>
    </source>
</evidence>
<sequence>MGESIPLAAPVPVEQAVLETFFSHLGIFSYDKAKDNVEKEREANKSAGGSWLSLLAALAHLAAAEKVYHSLTYLGQKLGGQSFFSRKDSIRTIYTSLHNELKKVVTGRGALGGTAPHVEELLSHLSEQLCFFVQARMEIADFYEKMYTLSTQKFINAEELVGLLDAIMKKYSSRFHHPILSPLESSFQLEVDVLCHLLKAQAQVSEWKFLPSLVNLHSAHTKLQTWGQIFEKQRETKKHLFGGQSQKAVQPPHLFLWLMKLKNMLLAKFSFYFHEALSRQTTASEMKTLTAKANPDFFGKISSFIRKYDAANVSLIFDNRGSESFQGHGYHHPHSYREAPKGVDQYPAVVSLPSDRPVMHWPNVIMIMTDRTSDLNSLEKVVHFYDDKVQSTYFLTRPEPHFTIVIIFESKKSERDSHFISFLNEVSLALKNPKVFASLKPGAKG</sequence>
<gene>
    <name evidence="8" type="primary">KICS2</name>
    <name type="synonym">C12orf66</name>
</gene>
<feature type="chain" id="PRO_0000321902" description="KICSTOR subunit 2">
    <location>
        <begin position="1"/>
        <end position="445"/>
    </location>
</feature>
<feature type="sequence variant" id="VAR_090445" description="In MRT83; likely pathogenic." evidence="4">
    <location>
        <begin position="3"/>
        <end position="445"/>
    </location>
</feature>
<feature type="sequence variant" id="VAR_039371" description="In dbSNP:rs2335390.">
    <original>I</original>
    <variation>M</variation>
    <location>
        <position position="139"/>
    </location>
</feature>
<feature type="sequence variant" id="VAR_090446" description="In MRT83; uncertain significance; decreased interaction with SZT2." evidence="4">
    <original>D</original>
    <variation>E</variation>
    <location>
        <position position="296"/>
    </location>
</feature>
<feature type="sequence variant" id="VAR_090447" description="In MRT83; likely pathogenic; decreased function in negative regulation of TORC1 signaling; increased protein phosphorylation is observed in homozygous patient cells upon aminoacid deprivation; decreased interaction with SZT2." evidence="4">
    <original>Y</original>
    <variation>C</variation>
    <location>
        <position position="393"/>
    </location>
</feature>
<feature type="sequence variant" id="VAR_039372" description="In dbSNP:rs699638." evidence="1 2 5">
    <original>A</original>
    <variation>S</variation>
    <location>
        <position position="443"/>
    </location>
</feature>
<protein>
    <recommendedName>
        <fullName evidence="6">KICSTOR subunit 2</fullName>
    </recommendedName>
    <alternativeName>
        <fullName evidence="7">KICSTOR complex protein C12orf66</fullName>
    </alternativeName>
</protein>